<keyword id="KW-0963">Cytoplasm</keyword>
<keyword id="KW-0539">Nucleus</keyword>
<keyword id="KW-0653">Protein transport</keyword>
<keyword id="KW-1185">Reference proteome</keyword>
<keyword id="KW-0677">Repeat</keyword>
<keyword id="KW-0813">Transport</keyword>
<name>IPO13_PONAB</name>
<reference key="1">
    <citation type="submission" date="2004-11" db="EMBL/GenBank/DDBJ databases">
        <authorList>
            <consortium name="The German cDNA consortium"/>
        </authorList>
    </citation>
    <scope>NUCLEOTIDE SEQUENCE [LARGE SCALE MRNA]</scope>
    <source>
        <tissue>Brain cortex</tissue>
    </source>
</reference>
<dbReference type="EMBL" id="CR859518">
    <property type="protein sequence ID" value="CAH91686.1"/>
    <property type="molecule type" value="mRNA"/>
</dbReference>
<dbReference type="RefSeq" id="NP_001125988.1">
    <property type="nucleotide sequence ID" value="NM_001132516.1"/>
</dbReference>
<dbReference type="SMR" id="Q5R974"/>
<dbReference type="FunCoup" id="Q5R974">
    <property type="interactions" value="1471"/>
</dbReference>
<dbReference type="STRING" id="9601.ENSPPYP00000011931"/>
<dbReference type="GeneID" id="100172927"/>
<dbReference type="KEGG" id="pon:100172927"/>
<dbReference type="CTD" id="9670"/>
<dbReference type="eggNOG" id="KOG2022">
    <property type="taxonomic scope" value="Eukaryota"/>
</dbReference>
<dbReference type="InParanoid" id="Q5R974"/>
<dbReference type="OrthoDB" id="2016913at2759"/>
<dbReference type="Proteomes" id="UP000001595">
    <property type="component" value="Unplaced"/>
</dbReference>
<dbReference type="GO" id="GO:0005737">
    <property type="term" value="C:cytoplasm"/>
    <property type="evidence" value="ECO:0007669"/>
    <property type="project" value="UniProtKB-SubCell"/>
</dbReference>
<dbReference type="GO" id="GO:0005634">
    <property type="term" value="C:nucleus"/>
    <property type="evidence" value="ECO:0007669"/>
    <property type="project" value="UniProtKB-SubCell"/>
</dbReference>
<dbReference type="GO" id="GO:0031267">
    <property type="term" value="F:small GTPase binding"/>
    <property type="evidence" value="ECO:0007669"/>
    <property type="project" value="InterPro"/>
</dbReference>
<dbReference type="GO" id="GO:0006606">
    <property type="term" value="P:protein import into nucleus"/>
    <property type="evidence" value="ECO:0007669"/>
    <property type="project" value="TreeGrafter"/>
</dbReference>
<dbReference type="FunFam" id="1.25.10.10:FF:000107">
    <property type="entry name" value="Importin-13"/>
    <property type="match status" value="1"/>
</dbReference>
<dbReference type="Gene3D" id="1.25.10.10">
    <property type="entry name" value="Leucine-rich Repeat Variant"/>
    <property type="match status" value="1"/>
</dbReference>
<dbReference type="InterPro" id="IPR011989">
    <property type="entry name" value="ARM-like"/>
</dbReference>
<dbReference type="InterPro" id="IPR016024">
    <property type="entry name" value="ARM-type_fold"/>
</dbReference>
<dbReference type="InterPro" id="IPR013598">
    <property type="entry name" value="Exportin-1/Importin-b-like"/>
</dbReference>
<dbReference type="InterPro" id="IPR001494">
    <property type="entry name" value="Importin-beta_N"/>
</dbReference>
<dbReference type="InterPro" id="IPR051345">
    <property type="entry name" value="Importin_beta-like_NTR"/>
</dbReference>
<dbReference type="InterPro" id="IPR040709">
    <property type="entry name" value="Importin_rep_1"/>
</dbReference>
<dbReference type="InterPro" id="IPR040944">
    <property type="entry name" value="Importin_rep_2"/>
</dbReference>
<dbReference type="InterPro" id="IPR040520">
    <property type="entry name" value="Importin_rep_3"/>
</dbReference>
<dbReference type="PANTHER" id="PTHR12363:SF33">
    <property type="entry name" value="IMPORTIN-13"/>
    <property type="match status" value="1"/>
</dbReference>
<dbReference type="PANTHER" id="PTHR12363">
    <property type="entry name" value="TRANSPORTIN 3 AND IMPORTIN 13"/>
    <property type="match status" value="1"/>
</dbReference>
<dbReference type="Pfam" id="PF03810">
    <property type="entry name" value="IBN_N"/>
    <property type="match status" value="1"/>
</dbReference>
<dbReference type="Pfam" id="PF18773">
    <property type="entry name" value="Importin_rep"/>
    <property type="match status" value="1"/>
</dbReference>
<dbReference type="Pfam" id="PF18786">
    <property type="entry name" value="Importin_rep_2"/>
    <property type="match status" value="2"/>
</dbReference>
<dbReference type="Pfam" id="PF18806">
    <property type="entry name" value="Importin_rep_3"/>
    <property type="match status" value="1"/>
</dbReference>
<dbReference type="Pfam" id="PF24138">
    <property type="entry name" value="TPR_TNPO3_IPO13_2nd"/>
    <property type="match status" value="1"/>
</dbReference>
<dbReference type="Pfam" id="PF24140">
    <property type="entry name" value="TPR_TNPO3_IPO13_3rd"/>
    <property type="match status" value="1"/>
</dbReference>
<dbReference type="Pfam" id="PF24139">
    <property type="entry name" value="TPR_TNPO3_IPO13_4th"/>
    <property type="match status" value="1"/>
</dbReference>
<dbReference type="Pfam" id="PF08389">
    <property type="entry name" value="Xpo1"/>
    <property type="match status" value="1"/>
</dbReference>
<dbReference type="SMART" id="SM00913">
    <property type="entry name" value="IBN_N"/>
    <property type="match status" value="1"/>
</dbReference>
<dbReference type="SUPFAM" id="SSF48371">
    <property type="entry name" value="ARM repeat"/>
    <property type="match status" value="1"/>
</dbReference>
<accession>Q5R974</accession>
<sequence>MERREEQPGAAGAGAAPALDFTVESVEKALHQLYYDPNIENKNLAQKWLMQAQVSPQAWHFSWQLLQPDKVPEIQYFGASALPIKTSRYWSDIPTDQYESLKAQLFTQITRFASGSKIVLTRLCVALASLALSMMPDAWPCAVADMVRLFQAEDSPVDGQGRCLALLELLTVLPEEFQTSRLPQYRKGLVRTSLAVECGAVFPLLEQLLQQPSSPSCVRQKVLKCFSSWVQLEVPLQDCEALIQAAFAALQDSELFDSSVEAIVNAISQPDAQRCVNTLLKLIPLVLGLQEQLRQAVQNGDMETSHGICRIAVALGENHSRALLDQVEHWQSFLALVNMIMFCTGIPGHYPVNETTSSLTLTFWYTLQDDILSFEAEKQAVYQQVYRPVYFQLVDVLLHKAQFPSDEEYGFWSSDEKEQFRIYRVDISDTLMYVYEMLGAELLSNLYDKLGRLLTSSEEPYSWQHTEALLYGFQSIAETIDVNYSDVVPGLIGLIPRISISNVQLADTVMFTIGALSEWLADHPVMINSVLPLVLHALGNPEPSVSSVSTLKKICRECKYDLPPYAANIVAVSQDVLMKQIHKTSQCMWLMQALGFLLSALQVEEILKNLHSLISPYIQQLEKLAEEIPNPSNKLAIVHILGLLSNLFTTLDISHHEDDHEGPELRKLPVPQGPNPVVVVLQQVFQLIQKVLSKWLNDAQVVEAVCAIFEKSVKTLLDDFAPMVPQLCEMLGRMYSTIPQASALDLTRQLVHIFAHEPAHFPPIEALFLLVTSVTLTLFQQGPRDHPDIVDSFMQLLAQALKRKPDLFLCERLDVKAVFQCAVLALKFPEAPTVKASCGFFTELLPRCGEVESVGKVVQEDGRMLLIAVLEAIGGQASRSLMDCFADILFALNKHCFSLLSMWIKEALQPPGFPSARLSPEQKDTFSQQILRERVNKRRVKEMVKEFTLLCRGLHGTDYTADY</sequence>
<protein>
    <recommendedName>
        <fullName>Importin-13</fullName>
        <shortName>Imp13</shortName>
    </recommendedName>
</protein>
<gene>
    <name type="primary">IPO13</name>
</gene>
<organism>
    <name type="scientific">Pongo abelii</name>
    <name type="common">Sumatran orangutan</name>
    <name type="synonym">Pongo pygmaeus abelii</name>
    <dbReference type="NCBI Taxonomy" id="9601"/>
    <lineage>
        <taxon>Eukaryota</taxon>
        <taxon>Metazoa</taxon>
        <taxon>Chordata</taxon>
        <taxon>Craniata</taxon>
        <taxon>Vertebrata</taxon>
        <taxon>Euteleostomi</taxon>
        <taxon>Mammalia</taxon>
        <taxon>Eutheria</taxon>
        <taxon>Euarchontoglires</taxon>
        <taxon>Primates</taxon>
        <taxon>Haplorrhini</taxon>
        <taxon>Catarrhini</taxon>
        <taxon>Hominidae</taxon>
        <taxon>Pongo</taxon>
    </lineage>
</organism>
<comment type="function">
    <text evidence="1">Functions in nuclear protein import as nuclear transport receptor. Serves as receptor for nuclear localization signals (NLS) in cargo substrates. Is thought to mediate docking of the importin/substrate complex to the nuclear pore complex (NPC) through binding to nucleoporin and the complex is subsequently translocated through the pore by an energy requiring, Ran-dependent mechanism. At the nucleoplasmic side of the NPC, Ran binds to the importin, the importin/substrate complex dissociates and importin is re-exported from the nucleus to the cytoplasm where GTP hydrolysis releases Ran. The directionality of nuclear import is thought to be conferred by an asymmetric distribution of the GTP- and GDP-bound forms of Ran between the cytoplasm and nucleus (By similarity). Mediates the nuclear import of UBC9, the RBM8A/MAGOH complex, PAX6 and probably other members of the paired homeobox family. Also mediates nuclear export of eIF-1A, and the cytoplasmic release of eIF-1A is triggered by the loading of import substrates onto IPO13 (By similarity).</text>
</comment>
<comment type="subunit">
    <text evidence="1">Interacts with UBC9, RAN, RBM8A, eIF-1A and PAX6.</text>
</comment>
<comment type="subcellular location">
    <subcellularLocation>
        <location evidence="1">Cytoplasm</location>
    </subcellularLocation>
    <subcellularLocation>
        <location evidence="1">Nucleus</location>
    </subcellularLocation>
</comment>
<comment type="similarity">
    <text evidence="2">Belongs to the importin beta family.</text>
</comment>
<evidence type="ECO:0000250" key="1"/>
<evidence type="ECO:0000305" key="2"/>
<feature type="chain" id="PRO_0000357047" description="Importin-13">
    <location>
        <begin position="1"/>
        <end position="963"/>
    </location>
</feature>
<feature type="repeat" description="HEAT 1">
    <location>
        <begin position="24"/>
        <end position="54"/>
    </location>
</feature>
<feature type="domain" description="Importin N-terminal">
    <location>
        <begin position="45"/>
        <end position="111"/>
    </location>
</feature>
<feature type="repeat" description="HEAT 2">
    <location>
        <begin position="56"/>
        <end position="88"/>
    </location>
</feature>
<feature type="repeat" description="HEAT 3">
    <location>
        <begin position="95"/>
        <end position="135"/>
    </location>
</feature>
<feature type="repeat" description="HEAT 4">
    <location>
        <begin position="142"/>
        <end position="179"/>
    </location>
</feature>
<feature type="repeat" description="HEAT 5">
    <location>
        <begin position="194"/>
        <end position="231"/>
    </location>
</feature>
<feature type="repeat" description="HEAT 6">
    <location>
        <begin position="236"/>
        <end position="268"/>
    </location>
</feature>
<feature type="repeat" description="HEAT 7">
    <location>
        <begin position="276"/>
        <end position="325"/>
    </location>
</feature>
<feature type="repeat" description="HEAT 8">
    <location>
        <begin position="330"/>
        <end position="372"/>
    </location>
</feature>
<feature type="repeat" description="HEAT 9">
    <location>
        <begin position="375"/>
        <end position="438"/>
    </location>
</feature>
<feature type="repeat" description="HEAT 10">
    <location>
        <begin position="440"/>
        <end position="476"/>
    </location>
</feature>
<feature type="repeat" description="HEAT 11">
    <location>
        <begin position="487"/>
        <end position="522"/>
    </location>
</feature>
<feature type="repeat" description="HEAT 12">
    <location>
        <begin position="524"/>
        <end position="558"/>
    </location>
</feature>
<feature type="repeat" description="HEAT 13">
    <location>
        <begin position="562"/>
        <end position="600"/>
    </location>
</feature>
<feature type="repeat" description="HEAT 14">
    <location>
        <begin position="603"/>
        <end position="648"/>
    </location>
</feature>
<feature type="repeat" description="HEAT 15">
    <location>
        <begin position="676"/>
        <end position="716"/>
    </location>
</feature>
<feature type="repeat" description="HEAT 16">
    <location>
        <begin position="720"/>
        <end position="754"/>
    </location>
</feature>
<feature type="repeat" description="HEAT 17">
    <location>
        <begin position="761"/>
        <end position="803"/>
    </location>
</feature>
<feature type="repeat" description="HEAT 18">
    <location>
        <begin position="815"/>
        <end position="845"/>
    </location>
</feature>
<feature type="repeat" description="HEAT 19">
    <location>
        <begin position="860"/>
        <end position="893"/>
    </location>
</feature>
<feature type="repeat" description="HEAT 20">
    <location>
        <begin position="897"/>
        <end position="931"/>
    </location>
</feature>
<proteinExistence type="evidence at transcript level"/>